<proteinExistence type="inferred from homology"/>
<evidence type="ECO:0000255" key="1">
    <source>
        <dbReference type="HAMAP-Rule" id="MF_00031"/>
    </source>
</evidence>
<evidence type="ECO:0000305" key="2"/>
<name>RUVA_RHIEC</name>
<dbReference type="EMBL" id="AF175525">
    <property type="protein sequence ID" value="AAF36813.1"/>
    <property type="molecule type" value="Genomic_DNA"/>
</dbReference>
<dbReference type="EMBL" id="CP000133">
    <property type="protein sequence ID" value="ABC92237.1"/>
    <property type="molecule type" value="Genomic_DNA"/>
</dbReference>
<dbReference type="RefSeq" id="WP_011426704.1">
    <property type="nucleotide sequence ID" value="NC_007761.1"/>
</dbReference>
<dbReference type="SMR" id="Q2K4J9"/>
<dbReference type="KEGG" id="ret:RHE_CH03481"/>
<dbReference type="eggNOG" id="COG0632">
    <property type="taxonomic scope" value="Bacteria"/>
</dbReference>
<dbReference type="HOGENOM" id="CLU_087936_3_0_5"/>
<dbReference type="OrthoDB" id="5293449at2"/>
<dbReference type="Proteomes" id="UP000001936">
    <property type="component" value="Chromosome"/>
</dbReference>
<dbReference type="GO" id="GO:0005737">
    <property type="term" value="C:cytoplasm"/>
    <property type="evidence" value="ECO:0007669"/>
    <property type="project" value="UniProtKB-SubCell"/>
</dbReference>
<dbReference type="GO" id="GO:0009379">
    <property type="term" value="C:Holliday junction helicase complex"/>
    <property type="evidence" value="ECO:0007669"/>
    <property type="project" value="InterPro"/>
</dbReference>
<dbReference type="GO" id="GO:0048476">
    <property type="term" value="C:Holliday junction resolvase complex"/>
    <property type="evidence" value="ECO:0007669"/>
    <property type="project" value="UniProtKB-UniRule"/>
</dbReference>
<dbReference type="GO" id="GO:0005524">
    <property type="term" value="F:ATP binding"/>
    <property type="evidence" value="ECO:0007669"/>
    <property type="project" value="InterPro"/>
</dbReference>
<dbReference type="GO" id="GO:0000400">
    <property type="term" value="F:four-way junction DNA binding"/>
    <property type="evidence" value="ECO:0007669"/>
    <property type="project" value="UniProtKB-UniRule"/>
</dbReference>
<dbReference type="GO" id="GO:0009378">
    <property type="term" value="F:four-way junction helicase activity"/>
    <property type="evidence" value="ECO:0007669"/>
    <property type="project" value="InterPro"/>
</dbReference>
<dbReference type="GO" id="GO:0006310">
    <property type="term" value="P:DNA recombination"/>
    <property type="evidence" value="ECO:0007669"/>
    <property type="project" value="UniProtKB-UniRule"/>
</dbReference>
<dbReference type="GO" id="GO:0006281">
    <property type="term" value="P:DNA repair"/>
    <property type="evidence" value="ECO:0007669"/>
    <property type="project" value="UniProtKB-UniRule"/>
</dbReference>
<dbReference type="Gene3D" id="1.10.150.20">
    <property type="entry name" value="5' to 3' exonuclease, C-terminal subdomain"/>
    <property type="match status" value="1"/>
</dbReference>
<dbReference type="Gene3D" id="1.10.8.10">
    <property type="entry name" value="DNA helicase RuvA subunit, C-terminal domain"/>
    <property type="match status" value="1"/>
</dbReference>
<dbReference type="Gene3D" id="2.40.50.140">
    <property type="entry name" value="Nucleic acid-binding proteins"/>
    <property type="match status" value="1"/>
</dbReference>
<dbReference type="HAMAP" id="MF_00031">
    <property type="entry name" value="DNA_HJ_migration_RuvA"/>
    <property type="match status" value="1"/>
</dbReference>
<dbReference type="InterPro" id="IPR013849">
    <property type="entry name" value="DNA_helicase_Holl-junc_RuvA_I"/>
</dbReference>
<dbReference type="InterPro" id="IPR012340">
    <property type="entry name" value="NA-bd_OB-fold"/>
</dbReference>
<dbReference type="InterPro" id="IPR000085">
    <property type="entry name" value="RuvA"/>
</dbReference>
<dbReference type="InterPro" id="IPR010994">
    <property type="entry name" value="RuvA_2-like"/>
</dbReference>
<dbReference type="InterPro" id="IPR011114">
    <property type="entry name" value="RuvA_C"/>
</dbReference>
<dbReference type="InterPro" id="IPR036267">
    <property type="entry name" value="RuvA_C_sf"/>
</dbReference>
<dbReference type="NCBIfam" id="TIGR00084">
    <property type="entry name" value="ruvA"/>
    <property type="match status" value="1"/>
</dbReference>
<dbReference type="Pfam" id="PF14520">
    <property type="entry name" value="HHH_5"/>
    <property type="match status" value="1"/>
</dbReference>
<dbReference type="Pfam" id="PF07499">
    <property type="entry name" value="RuvA_C"/>
    <property type="match status" value="1"/>
</dbReference>
<dbReference type="Pfam" id="PF01330">
    <property type="entry name" value="RuvA_N"/>
    <property type="match status" value="1"/>
</dbReference>
<dbReference type="SUPFAM" id="SSF46929">
    <property type="entry name" value="DNA helicase RuvA subunit, C-terminal domain"/>
    <property type="match status" value="1"/>
</dbReference>
<dbReference type="SUPFAM" id="SSF50249">
    <property type="entry name" value="Nucleic acid-binding proteins"/>
    <property type="match status" value="1"/>
</dbReference>
<dbReference type="SUPFAM" id="SSF47781">
    <property type="entry name" value="RuvA domain 2-like"/>
    <property type="match status" value="1"/>
</dbReference>
<gene>
    <name evidence="1" type="primary">ruvA</name>
    <name type="ordered locus">RHE_CH03481</name>
</gene>
<feature type="chain" id="PRO_1000002525" description="Holliday junction branch migration complex subunit RuvA">
    <location>
        <begin position="1"/>
        <end position="204"/>
    </location>
</feature>
<feature type="region of interest" description="Domain I" evidence="1">
    <location>
        <begin position="1"/>
        <end position="64"/>
    </location>
</feature>
<feature type="region of interest" description="Domain II" evidence="1">
    <location>
        <begin position="65"/>
        <end position="143"/>
    </location>
</feature>
<feature type="region of interest" description="Flexible linker" evidence="1">
    <location>
        <begin position="144"/>
        <end position="151"/>
    </location>
</feature>
<feature type="region of interest" description="Domain III" evidence="1">
    <location>
        <begin position="152"/>
        <end position="204"/>
    </location>
</feature>
<feature type="sequence conflict" description="In Ref. 1; AAF36813." evidence="2" ref="1">
    <original>QSVQGVGAKVALAVLSTLTPGELANA</original>
    <variation>SKASRASAPRWRSPCSRPLNARPSSPMP</variation>
    <location>
        <begin position="76"/>
        <end position="101"/>
    </location>
</feature>
<reference key="1">
    <citation type="journal article" date="2000" name="Gene">
        <title>Role of the ruvB gene in homologous and homeologous recombination in Rhizobium etli.</title>
        <authorList>
            <person name="Martinez-Salazar J.M."/>
            <person name="Romero D."/>
        </authorList>
    </citation>
    <scope>NUCLEOTIDE SEQUENCE [GENOMIC DNA]</scope>
    <source>
        <strain>CE3</strain>
    </source>
</reference>
<reference key="2">
    <citation type="journal article" date="2006" name="Proc. Natl. Acad. Sci. U.S.A.">
        <title>The partitioned Rhizobium etli genome: genetic and metabolic redundancy in seven interacting replicons.</title>
        <authorList>
            <person name="Gonzalez V."/>
            <person name="Santamaria R.I."/>
            <person name="Bustos P."/>
            <person name="Hernandez-Gonzalez I."/>
            <person name="Medrano-Soto A."/>
            <person name="Moreno-Hagelsieb G."/>
            <person name="Janga S.C."/>
            <person name="Ramirez M.A."/>
            <person name="Jimenez-Jacinto V."/>
            <person name="Collado-Vides J."/>
            <person name="Davila G."/>
        </authorList>
    </citation>
    <scope>NUCLEOTIDE SEQUENCE [LARGE SCALE GENOMIC DNA]</scope>
    <source>
        <strain>ATCC 51251 / DSM 11541 / JCM 21823 / NBRC 15573 / CFN 42</strain>
    </source>
</reference>
<sequence>MIGKLKGTIDEIGEDYVLVDVQGVCYVAYCSARTLSKLGSAGEACVLFIETYVREDQLKLFGFMTALEREWFNLLQSVQGVGAKVALAVLSTLTPGELANAIALQDRAAVSRAPGVGPKVAMRLVTELKNRAPAYAGEAINIALKRELGEGVAAAPVADAVSALTNLGYSRDQAANAVAAAMKTAGEGADSAKLIRLGLKELAR</sequence>
<organism>
    <name type="scientific">Rhizobium etli (strain ATCC 51251 / DSM 11541 / JCM 21823 / NBRC 15573 / CFN 42)</name>
    <dbReference type="NCBI Taxonomy" id="347834"/>
    <lineage>
        <taxon>Bacteria</taxon>
        <taxon>Pseudomonadati</taxon>
        <taxon>Pseudomonadota</taxon>
        <taxon>Alphaproteobacteria</taxon>
        <taxon>Hyphomicrobiales</taxon>
        <taxon>Rhizobiaceae</taxon>
        <taxon>Rhizobium/Agrobacterium group</taxon>
        <taxon>Rhizobium</taxon>
    </lineage>
</organism>
<keyword id="KW-0963">Cytoplasm</keyword>
<keyword id="KW-0227">DNA damage</keyword>
<keyword id="KW-0233">DNA recombination</keyword>
<keyword id="KW-0234">DNA repair</keyword>
<keyword id="KW-0238">DNA-binding</keyword>
<keyword id="KW-1185">Reference proteome</keyword>
<accession>Q2K4J9</accession>
<accession>Q9L9C4</accession>
<protein>
    <recommendedName>
        <fullName evidence="1">Holliday junction branch migration complex subunit RuvA</fullName>
    </recommendedName>
</protein>
<comment type="function">
    <text evidence="1">The RuvA-RuvB-RuvC complex processes Holliday junction (HJ) DNA during genetic recombination and DNA repair, while the RuvA-RuvB complex plays an important role in the rescue of blocked DNA replication forks via replication fork reversal (RFR). RuvA specifically binds to HJ cruciform DNA, conferring on it an open structure. The RuvB hexamer acts as an ATP-dependent pump, pulling dsDNA into and through the RuvAB complex. HJ branch migration allows RuvC to scan DNA until it finds its consensus sequence, where it cleaves and resolves the cruciform DNA.</text>
</comment>
<comment type="subunit">
    <text evidence="1">Homotetramer. Forms an RuvA(8)-RuvB(12)-Holliday junction (HJ) complex. HJ DNA is sandwiched between 2 RuvA tetramers; dsDNA enters through RuvA and exits via RuvB. An RuvB hexamer assembles on each DNA strand where it exits the tetramer. Each RuvB hexamer is contacted by two RuvA subunits (via domain III) on 2 adjacent RuvB subunits; this complex drives branch migration. In the full resolvosome a probable DNA-RuvA(4)-RuvB(12)-RuvC(2) complex forms which resolves the HJ.</text>
</comment>
<comment type="subcellular location">
    <subcellularLocation>
        <location evidence="1">Cytoplasm</location>
    </subcellularLocation>
</comment>
<comment type="domain">
    <text evidence="1">Has three domains with a flexible linker between the domains II and III and assumes an 'L' shape. Domain III is highly mobile and contacts RuvB.</text>
</comment>
<comment type="similarity">
    <text evidence="1">Belongs to the RuvA family.</text>
</comment>